<sequence>MAFLKKSLFLVLFLGLVSLSICDEEKRENEDEENQEDDEQSEMRRGLRSKIWLWVLLMIWQESNKFKKM</sequence>
<organism>
    <name type="scientific">Phyllomedusa sauvagei</name>
    <name type="common">Sauvage's leaf frog</name>
    <dbReference type="NCBI Taxonomy" id="8395"/>
    <lineage>
        <taxon>Eukaryota</taxon>
        <taxon>Metazoa</taxon>
        <taxon>Chordata</taxon>
        <taxon>Craniata</taxon>
        <taxon>Vertebrata</taxon>
        <taxon>Euteleostomi</taxon>
        <taxon>Amphibia</taxon>
        <taxon>Batrachia</taxon>
        <taxon>Anura</taxon>
        <taxon>Neobatrachia</taxon>
        <taxon>Hyloidea</taxon>
        <taxon>Hylidae</taxon>
        <taxon>Phyllomedusinae</taxon>
        <taxon>Phyllomedusa</taxon>
    </lineage>
</organism>
<name>DRATY_PHYSA</name>
<dbReference type="EMBL" id="AJ972905">
    <property type="protein sequence ID" value="CAI99864.1"/>
    <property type="molecule type" value="mRNA"/>
</dbReference>
<dbReference type="GO" id="GO:0005576">
    <property type="term" value="C:extracellular region"/>
    <property type="evidence" value="ECO:0007669"/>
    <property type="project" value="UniProtKB-SubCell"/>
</dbReference>
<dbReference type="GO" id="GO:0016020">
    <property type="term" value="C:membrane"/>
    <property type="evidence" value="ECO:0007669"/>
    <property type="project" value="UniProtKB-KW"/>
</dbReference>
<dbReference type="GO" id="GO:0044218">
    <property type="term" value="C:other organism cell membrane"/>
    <property type="evidence" value="ECO:0007669"/>
    <property type="project" value="UniProtKB-KW"/>
</dbReference>
<dbReference type="GO" id="GO:0006935">
    <property type="term" value="P:chemotaxis"/>
    <property type="evidence" value="ECO:0007669"/>
    <property type="project" value="UniProtKB-KW"/>
</dbReference>
<dbReference type="GO" id="GO:0042742">
    <property type="term" value="P:defense response to bacterium"/>
    <property type="evidence" value="ECO:0007669"/>
    <property type="project" value="UniProtKB-KW"/>
</dbReference>
<dbReference type="GO" id="GO:0045087">
    <property type="term" value="P:innate immune response"/>
    <property type="evidence" value="ECO:0007669"/>
    <property type="project" value="UniProtKB-KW"/>
</dbReference>
<dbReference type="InterPro" id="IPR004275">
    <property type="entry name" value="Frog_antimicrobial_propeptide"/>
</dbReference>
<dbReference type="Pfam" id="PF03032">
    <property type="entry name" value="FSAP_sig_propep"/>
    <property type="match status" value="1"/>
</dbReference>
<proteinExistence type="evidence at protein level"/>
<reference key="1">
    <citation type="journal article" date="2006" name="Biochemistry">
        <title>Dermaseptin S9, an alpha-helical antimicrobial peptide with a hydrophobic core and cationic termini.</title>
        <authorList>
            <person name="Lequin O."/>
            <person name="Ladram A."/>
            <person name="Chabbert L."/>
            <person name="Bruston F."/>
            <person name="Convert O."/>
            <person name="Vanhoye D."/>
            <person name="Chassaing G."/>
            <person name="Nicolas P."/>
            <person name="Amiche M."/>
        </authorList>
    </citation>
    <scope>NUCLEOTIDE SEQUENCE [MRNA]</scope>
    <scope>FUNCTION</scope>
    <scope>SYNTHESIS OF 46-69</scope>
    <scope>SUBCELLULAR LOCATION</scope>
    <scope>STRUCTURE BY NMR OF 46-69 IN TFE</scope>
    <scope>SUBUNIT</scope>
    <source>
        <tissue>Skin</tissue>
    </source>
</reference>
<reference key="2">
    <citation type="journal article" date="2008" name="FEBS J.">
        <title>Structural requirements for antimicrobial versus chemoattractant activities for dermaseptin S9.</title>
        <authorList>
            <person name="Auvynet C."/>
            <person name="El Amri C."/>
            <person name="Lacombe C."/>
            <person name="Bruston F."/>
            <person name="Bourdais J."/>
            <person name="Nicolas P."/>
            <person name="Rosenstein Y."/>
        </authorList>
    </citation>
    <scope>FUNCTION</scope>
    <scope>SUBUNIT</scope>
    <scope>BIOPHYSICOCHEMICAL PROPERTIES</scope>
</reference>
<reference key="3">
    <citation type="journal article" date="2010" name="Antimicrob. Agents Chemother.">
        <title>Identification of novel human immunodeficiency virus type 1-inhibitory peptides based on the antimicrobial peptide database.</title>
        <authorList>
            <person name="Wang G."/>
            <person name="Watson K.M."/>
            <person name="Peterkofsky A."/>
            <person name="Buckheit R.W. Jr."/>
        </authorList>
    </citation>
    <scope>MUTAGENESIS OF LYS-50; LYS-65 AND LYS-68</scope>
</reference>
<reference key="4">
    <citation type="journal article" date="2013" name="PLoS ONE">
        <title>Biophysical investigation of the membrane-disrupting mechanism of the antimicrobial and amyloid-like peptide dermaseptin S9.</title>
        <authorList>
            <person name="Caillon L."/>
            <person name="Killian J.A."/>
            <person name="Lequin O."/>
            <person name="Khemtemourian L."/>
        </authorList>
    </citation>
    <scope>FUNCTION</scope>
    <scope>SUBUNIT</scope>
    <scope>SYNTHESIS OF 46-69</scope>
</reference>
<accession>Q1EN15</accession>
<keyword id="KW-0878">Amphibian defense peptide</keyword>
<keyword id="KW-0034">Amyloid</keyword>
<keyword id="KW-0044">Antibiotic</keyword>
<keyword id="KW-0929">Antimicrobial</keyword>
<keyword id="KW-0145">Chemotaxis</keyword>
<keyword id="KW-0165">Cleavage on pair of basic residues</keyword>
<keyword id="KW-0391">Immunity</keyword>
<keyword id="KW-0399">Innate immunity</keyword>
<keyword id="KW-0472">Membrane</keyword>
<keyword id="KW-0964">Secreted</keyword>
<keyword id="KW-0732">Signal</keyword>
<keyword id="KW-1052">Target cell membrane</keyword>
<keyword id="KW-1053">Target membrane</keyword>
<evidence type="ECO:0000255" key="1"/>
<evidence type="ECO:0000256" key="2">
    <source>
        <dbReference type="SAM" id="MobiDB-lite"/>
    </source>
</evidence>
<evidence type="ECO:0000269" key="3">
    <source>
    </source>
</evidence>
<evidence type="ECO:0000269" key="4">
    <source>
    </source>
</evidence>
<evidence type="ECO:0000269" key="5">
    <source>
    </source>
</evidence>
<evidence type="ECO:0000269" key="6">
    <source>
    </source>
</evidence>
<evidence type="ECO:0000303" key="7">
    <source>
    </source>
</evidence>
<evidence type="ECO:0000303" key="8">
    <source>
    </source>
</evidence>
<evidence type="ECO:0000303" key="9">
    <source>
    </source>
</evidence>
<evidence type="ECO:0000305" key="10"/>
<evidence type="ECO:0000305" key="11">
    <source>
    </source>
</evidence>
<evidence type="ECO:0000305" key="12">
    <source>
    </source>
</evidence>
<comment type="function">
    <text evidence="3 4 6">Atypical cationic antimicrobial peptide with potent activity against Gram-negative and Gram-positive bacteria (PubMed:16401077, PubMed:18637027). Acts by inducing permeabilization of bacterial membrane (PubMed:16401077). In vitro, also shows chemoattractant activity, which is mediated through a G protein-coupled receptor (probably FPR2 coupled to the ERK1/2 MAPK kinase pathway) (PubMed:18637027). Has slow-kinetic self-association and amyloid-like properties that modulate its activity (PubMed:18637027, PubMed:24146759). The soluble, weakly self-associated forms act on leukocytes to promote chemotaxis but have low antibacterial activity, the oligomers exhibit potent antimicrobial activity, whereas the amyloid-like fibrils have a very weak antibacterial activity (PubMed:18637027). The membrane composition has a great influence on the peptide behavior (PubMed:24146759). The peptide induces membrane leakage and insertion to a lesser extent in model membranes of the anionic lipid phosphatidylglycerol (PG) than in the model membranes of the zwitterionic lipid phosphatidylcholine (PC) vesicles (PubMed:24146759). It forms more fibrils in PC than in PG (PubMed:24146759). Membrane perturbations are more observed in the presence of PG than in the presence of PC (PubMed:24146759). The peptide shows low hemolytic activity (PubMed:16401077).</text>
</comment>
<comment type="biophysicochemical properties">
    <temperatureDependence>
        <text evidence="4">Thermostable.</text>
    </temperatureDependence>
</comment>
<comment type="subunit">
    <text evidence="3 4 6 10">Monomer and/or weakly self-associated, oligomer, and amyloid-like fibril (PubMed:18637027, PubMed:24146759). Can adopt a monomeric nonamphipathic alpha-helical conformation, possibly with the aid of its cationic N- and C-termini, when bound to anionic membranes (Probable) (PubMed:16401077). Forms stable and ordered beta-sheet aggregates in aqueous environment or when bound to anionic or zwitterionic phospholipid vesicles (PubMed:18637027, PubMed:24146759).</text>
</comment>
<comment type="subcellular location">
    <subcellularLocation>
        <location evidence="3">Secreted</location>
    </subcellularLocation>
    <subcellularLocation>
        <location evidence="3">Target cell membrane</location>
    </subcellularLocation>
</comment>
<comment type="tissue specificity">
    <text evidence="11">Expressed by the skin glands.</text>
</comment>
<comment type="domain">
    <text evidence="12">Has a highly hydrophobic core sequence flanked at either side by cationic termini.</text>
</comment>
<comment type="miscellaneous">
    <text evidence="5">The mutant DRS S9r3 shows antiviral activity against HIV.</text>
</comment>
<comment type="similarity">
    <text evidence="10">Belongs to the frog skin active peptide (FSAP) family.</text>
</comment>
<comment type="online information" name="The antimicrobial peptide database">
    <link uri="https://wangapd3.com/database/query_output.php?ID=00764"/>
</comment>
<protein>
    <recommendedName>
        <fullName evidence="9">Atypical cationic antimicrobial peptide</fullName>
    </recommendedName>
    <alternativeName>
        <fullName evidence="7 8 9">Dermaseptin-S9</fullName>
        <shortName evidence="7 8 9">DRS-S9</shortName>
    </alternativeName>
</protein>
<feature type="signal peptide" evidence="1">
    <location>
        <begin position="1"/>
        <end position="22"/>
    </location>
</feature>
<feature type="propeptide" id="PRO_0000449896" evidence="11">
    <location>
        <begin position="23"/>
        <end position="45"/>
    </location>
</feature>
<feature type="peptide" id="PRO_5004188775" description="Atypical cationic antimicrobial peptide" evidence="11">
    <location>
        <begin position="46"/>
        <end position="69"/>
    </location>
</feature>
<feature type="region of interest" description="Disordered" evidence="2">
    <location>
        <begin position="25"/>
        <end position="45"/>
    </location>
</feature>
<feature type="compositionally biased region" description="Acidic residues" evidence="2">
    <location>
        <begin position="30"/>
        <end position="40"/>
    </location>
</feature>
<feature type="mutagenesis site" description="In DRS S9r3; shows high inhibitory activity against HIV; when associated with R-65 and R-68." evidence="5">
    <original>K</original>
    <variation>R</variation>
    <location>
        <position position="50"/>
    </location>
</feature>
<feature type="mutagenesis site" description="In DRS S9r3; shows high inhibitory activity against HIV; when associated with R-50 and R-68." evidence="5">
    <original>K</original>
    <variation>R</variation>
    <location>
        <position position="65"/>
    </location>
</feature>
<feature type="mutagenesis site" description="In DRS S9r3; shows high inhibitory activity against HIV; when associated with R-50 and R-65." evidence="5">
    <original>K</original>
    <variation>R</variation>
    <location>
        <position position="68"/>
    </location>
</feature>